<name>ALMTB_ARATH</name>
<reference key="1">
    <citation type="journal article" date="1998" name="Nature">
        <title>Analysis of 1.9 Mb of contiguous sequence from chromosome 4 of Arabidopsis thaliana.</title>
        <authorList>
            <person name="Bevan M."/>
            <person name="Bancroft I."/>
            <person name="Bent E."/>
            <person name="Love K."/>
            <person name="Goodman H.M."/>
            <person name="Dean C."/>
            <person name="Bergkamp R."/>
            <person name="Dirkse W."/>
            <person name="van Staveren M."/>
            <person name="Stiekema W."/>
            <person name="Drost L."/>
            <person name="Ridley P."/>
            <person name="Hudson S.-A."/>
            <person name="Patel K."/>
            <person name="Murphy G."/>
            <person name="Piffanelli P."/>
            <person name="Wedler H."/>
            <person name="Wedler E."/>
            <person name="Wambutt R."/>
            <person name="Weitzenegger T."/>
            <person name="Pohl T."/>
            <person name="Terryn N."/>
            <person name="Gielen J."/>
            <person name="Villarroel R."/>
            <person name="De Clercq R."/>
            <person name="van Montagu M."/>
            <person name="Lecharny A."/>
            <person name="Aubourg S."/>
            <person name="Gy I."/>
            <person name="Kreis M."/>
            <person name="Lao N."/>
            <person name="Kavanagh T."/>
            <person name="Hempel S."/>
            <person name="Kotter P."/>
            <person name="Entian K.-D."/>
            <person name="Rieger M."/>
            <person name="Schaefer M."/>
            <person name="Funk B."/>
            <person name="Mueller-Auer S."/>
            <person name="Silvey M."/>
            <person name="James R."/>
            <person name="Monfort A."/>
            <person name="Pons A."/>
            <person name="Puigdomenech P."/>
            <person name="Douka A."/>
            <person name="Voukelatou E."/>
            <person name="Milioni D."/>
            <person name="Hatzopoulos P."/>
            <person name="Piravandi E."/>
            <person name="Obermaier B."/>
            <person name="Hilbert H."/>
            <person name="Duesterhoeft A."/>
            <person name="Moores T."/>
            <person name="Jones J.D.G."/>
            <person name="Eneva T."/>
            <person name="Palme K."/>
            <person name="Benes V."/>
            <person name="Rechmann S."/>
            <person name="Ansorge W."/>
            <person name="Cooke R."/>
            <person name="Berger C."/>
            <person name="Delseny M."/>
            <person name="Voet M."/>
            <person name="Volckaert G."/>
            <person name="Mewes H.-W."/>
            <person name="Klosterman S."/>
            <person name="Schueller C."/>
            <person name="Chalwatzis N."/>
        </authorList>
    </citation>
    <scope>NUCLEOTIDE SEQUENCE [LARGE SCALE GENOMIC DNA]</scope>
    <source>
        <strain>cv. Columbia</strain>
    </source>
</reference>
<reference key="2">
    <citation type="journal article" date="2017" name="Plant J.">
        <title>Araport11: a complete reannotation of the Arabidopsis thaliana reference genome.</title>
        <authorList>
            <person name="Cheng C.Y."/>
            <person name="Krishnakumar V."/>
            <person name="Chan A.P."/>
            <person name="Thibaud-Nissen F."/>
            <person name="Schobel S."/>
            <person name="Town C.D."/>
        </authorList>
    </citation>
    <scope>GENOME REANNOTATION</scope>
    <source>
        <strain>cv. Columbia</strain>
    </source>
</reference>
<reference key="3">
    <citation type="journal article" date="2006" name="Proc. Natl. Acad. Sci. U.S.A.">
        <title>AtALMT1, which encodes a malate transporter, is identified as one of several genes critical for aluminum tolerance in Arabidopsis.</title>
        <authorList>
            <person name="Hoekenga O.A."/>
            <person name="Maron L.G."/>
            <person name="Pineros M.A."/>
            <person name="Cancado G.M."/>
            <person name="Shaff J."/>
            <person name="Kobayashi Y."/>
            <person name="Ryan P.R."/>
            <person name="Dong B."/>
            <person name="Delhaize E."/>
            <person name="Sasaki T."/>
            <person name="Matsumoto H."/>
            <person name="Yamamoto Y."/>
            <person name="Koyama H."/>
            <person name="Kochian L.V."/>
        </authorList>
    </citation>
    <scope>GENE FAMILY</scope>
    <scope>NOMENCLATURE</scope>
</reference>
<sequence>MSNKVHVGNIEMEEGLSKTKWMVLEPSEKIKKIPKRLWSVGKEDPRRVIHAFKVGHSLTLVSLLYFMENLFKGIGSNAIWAVMTVVAVLLEFFAVEGLTISEKVILSMAARGRESAAEPHERNEAGNVCHSIKFLPKSIARAKQHHVLNQPY</sequence>
<accession>Q3E9Z9</accession>
<protein>
    <recommendedName>
        <fullName>Putative aluminum-activated malate transporter 11</fullName>
        <shortName>AtALMT11</shortName>
    </recommendedName>
</protein>
<comment type="function">
    <text evidence="1">Malate transporter.</text>
</comment>
<comment type="subcellular location">
    <subcellularLocation>
        <location evidence="3">Membrane</location>
        <topology evidence="3">Multi-pass membrane protein</topology>
    </subcellularLocation>
</comment>
<comment type="similarity">
    <text evidence="3">Belongs to the aromatic acid exporter (TC 2.A.85) family.</text>
</comment>
<comment type="caution">
    <text evidence="3">Could be the product of a pseudogene.</text>
</comment>
<proteinExistence type="uncertain"/>
<gene>
    <name type="primary">ALMT11</name>
    <name type="ordered locus">At4g17585</name>
    <name type="ORF">FCAALL.48</name>
</gene>
<dbReference type="EMBL" id="Z97343">
    <property type="status" value="NOT_ANNOTATED_CDS"/>
    <property type="molecule type" value="Genomic_DNA"/>
</dbReference>
<dbReference type="EMBL" id="CP002687">
    <property type="protein sequence ID" value="AEE83916.1"/>
    <property type="molecule type" value="Genomic_DNA"/>
</dbReference>
<dbReference type="RefSeq" id="NP_193493.1">
    <property type="nucleotide sequence ID" value="NM_117866.1"/>
</dbReference>
<dbReference type="SMR" id="Q3E9Z9"/>
<dbReference type="STRING" id="3702.Q3E9Z9"/>
<dbReference type="PaxDb" id="3702-AT4G17585.1"/>
<dbReference type="EnsemblPlants" id="AT4G17585.1">
    <property type="protein sequence ID" value="AT4G17585.1"/>
    <property type="gene ID" value="AT4G17585"/>
</dbReference>
<dbReference type="GeneID" id="827476"/>
<dbReference type="Gramene" id="AT4G17585.1">
    <property type="protein sequence ID" value="AT4G17585.1"/>
    <property type="gene ID" value="AT4G17585"/>
</dbReference>
<dbReference type="KEGG" id="ath:AT4G17585"/>
<dbReference type="Araport" id="AT4G17585"/>
<dbReference type="TAIR" id="AT4G17585"/>
<dbReference type="eggNOG" id="KOG4711">
    <property type="taxonomic scope" value="Eukaryota"/>
</dbReference>
<dbReference type="HOGENOM" id="CLU_1724806_0_0_1"/>
<dbReference type="InParanoid" id="Q3E9Z9"/>
<dbReference type="PhylomeDB" id="Q3E9Z9"/>
<dbReference type="Proteomes" id="UP000006548">
    <property type="component" value="Chromosome 4"/>
</dbReference>
<dbReference type="ExpressionAtlas" id="Q3E9Z9">
    <property type="expression patterns" value="baseline and differential"/>
</dbReference>
<dbReference type="GO" id="GO:0016020">
    <property type="term" value="C:membrane"/>
    <property type="evidence" value="ECO:0007669"/>
    <property type="project" value="UniProtKB-SubCell"/>
</dbReference>
<dbReference type="GO" id="GO:0015743">
    <property type="term" value="P:malate transport"/>
    <property type="evidence" value="ECO:0007669"/>
    <property type="project" value="InterPro"/>
</dbReference>
<dbReference type="GO" id="GO:0034220">
    <property type="term" value="P:monoatomic ion transmembrane transport"/>
    <property type="evidence" value="ECO:0007669"/>
    <property type="project" value="UniProtKB-KW"/>
</dbReference>
<dbReference type="InterPro" id="IPR020966">
    <property type="entry name" value="ALMT"/>
</dbReference>
<dbReference type="PANTHER" id="PTHR31086">
    <property type="entry name" value="ALUMINUM-ACTIVATED MALATE TRANSPORTER 10"/>
    <property type="match status" value="1"/>
</dbReference>
<dbReference type="Pfam" id="PF11744">
    <property type="entry name" value="ALMT"/>
    <property type="match status" value="1"/>
</dbReference>
<evidence type="ECO:0000250" key="1"/>
<evidence type="ECO:0000255" key="2"/>
<evidence type="ECO:0000305" key="3"/>
<organism>
    <name type="scientific">Arabidopsis thaliana</name>
    <name type="common">Mouse-ear cress</name>
    <dbReference type="NCBI Taxonomy" id="3702"/>
    <lineage>
        <taxon>Eukaryota</taxon>
        <taxon>Viridiplantae</taxon>
        <taxon>Streptophyta</taxon>
        <taxon>Embryophyta</taxon>
        <taxon>Tracheophyta</taxon>
        <taxon>Spermatophyta</taxon>
        <taxon>Magnoliopsida</taxon>
        <taxon>eudicotyledons</taxon>
        <taxon>Gunneridae</taxon>
        <taxon>Pentapetalae</taxon>
        <taxon>rosids</taxon>
        <taxon>malvids</taxon>
        <taxon>Brassicales</taxon>
        <taxon>Brassicaceae</taxon>
        <taxon>Camelineae</taxon>
        <taxon>Arabidopsis</taxon>
    </lineage>
</organism>
<feature type="chain" id="PRO_0000401470" description="Putative aluminum-activated malate transporter 11">
    <location>
        <begin position="1"/>
        <end position="152"/>
    </location>
</feature>
<feature type="transmembrane region" description="Helical" evidence="2">
    <location>
        <begin position="48"/>
        <end position="68"/>
    </location>
</feature>
<feature type="transmembrane region" description="Helical" evidence="2">
    <location>
        <begin position="78"/>
        <end position="98"/>
    </location>
</feature>
<keyword id="KW-0407">Ion channel</keyword>
<keyword id="KW-0406">Ion transport</keyword>
<keyword id="KW-0472">Membrane</keyword>
<keyword id="KW-1185">Reference proteome</keyword>
<keyword id="KW-0812">Transmembrane</keyword>
<keyword id="KW-1133">Transmembrane helix</keyword>
<keyword id="KW-0813">Transport</keyword>